<gene>
    <name evidence="1" type="primary">dnaJ</name>
    <name type="ordered locus">PSEEN0779</name>
</gene>
<keyword id="KW-0143">Chaperone</keyword>
<keyword id="KW-0963">Cytoplasm</keyword>
<keyword id="KW-0235">DNA replication</keyword>
<keyword id="KW-0479">Metal-binding</keyword>
<keyword id="KW-0677">Repeat</keyword>
<keyword id="KW-0346">Stress response</keyword>
<keyword id="KW-0862">Zinc</keyword>
<keyword id="KW-0863">Zinc-finger</keyword>
<dbReference type="EMBL" id="CT573326">
    <property type="protein sequence ID" value="CAK13696.1"/>
    <property type="molecule type" value="Genomic_DNA"/>
</dbReference>
<dbReference type="RefSeq" id="WP_011532127.1">
    <property type="nucleotide sequence ID" value="NC_008027.1"/>
</dbReference>
<dbReference type="SMR" id="Q1IF58"/>
<dbReference type="STRING" id="384676.PSEEN0779"/>
<dbReference type="GeneID" id="32804086"/>
<dbReference type="KEGG" id="pen:PSEEN0779"/>
<dbReference type="eggNOG" id="COG0484">
    <property type="taxonomic scope" value="Bacteria"/>
</dbReference>
<dbReference type="HOGENOM" id="CLU_017633_0_7_6"/>
<dbReference type="OrthoDB" id="9779889at2"/>
<dbReference type="Proteomes" id="UP000000658">
    <property type="component" value="Chromosome"/>
</dbReference>
<dbReference type="GO" id="GO:0005737">
    <property type="term" value="C:cytoplasm"/>
    <property type="evidence" value="ECO:0007669"/>
    <property type="project" value="UniProtKB-SubCell"/>
</dbReference>
<dbReference type="GO" id="GO:0005524">
    <property type="term" value="F:ATP binding"/>
    <property type="evidence" value="ECO:0007669"/>
    <property type="project" value="InterPro"/>
</dbReference>
<dbReference type="GO" id="GO:0031072">
    <property type="term" value="F:heat shock protein binding"/>
    <property type="evidence" value="ECO:0007669"/>
    <property type="project" value="InterPro"/>
</dbReference>
<dbReference type="GO" id="GO:0051082">
    <property type="term" value="F:unfolded protein binding"/>
    <property type="evidence" value="ECO:0007669"/>
    <property type="project" value="UniProtKB-UniRule"/>
</dbReference>
<dbReference type="GO" id="GO:0008270">
    <property type="term" value="F:zinc ion binding"/>
    <property type="evidence" value="ECO:0007669"/>
    <property type="project" value="UniProtKB-UniRule"/>
</dbReference>
<dbReference type="GO" id="GO:0051085">
    <property type="term" value="P:chaperone cofactor-dependent protein refolding"/>
    <property type="evidence" value="ECO:0007669"/>
    <property type="project" value="TreeGrafter"/>
</dbReference>
<dbReference type="GO" id="GO:0006260">
    <property type="term" value="P:DNA replication"/>
    <property type="evidence" value="ECO:0007669"/>
    <property type="project" value="UniProtKB-KW"/>
</dbReference>
<dbReference type="GO" id="GO:0042026">
    <property type="term" value="P:protein refolding"/>
    <property type="evidence" value="ECO:0007669"/>
    <property type="project" value="TreeGrafter"/>
</dbReference>
<dbReference type="GO" id="GO:0009408">
    <property type="term" value="P:response to heat"/>
    <property type="evidence" value="ECO:0007669"/>
    <property type="project" value="InterPro"/>
</dbReference>
<dbReference type="CDD" id="cd06257">
    <property type="entry name" value="DnaJ"/>
    <property type="match status" value="1"/>
</dbReference>
<dbReference type="CDD" id="cd10747">
    <property type="entry name" value="DnaJ_C"/>
    <property type="match status" value="1"/>
</dbReference>
<dbReference type="CDD" id="cd10719">
    <property type="entry name" value="DnaJ_zf"/>
    <property type="match status" value="1"/>
</dbReference>
<dbReference type="FunFam" id="1.10.287.110:FF:000051">
    <property type="entry name" value="Molecular chaperone DnaJ"/>
    <property type="match status" value="1"/>
</dbReference>
<dbReference type="FunFam" id="2.10.230.10:FF:000002">
    <property type="entry name" value="Molecular chaperone DnaJ"/>
    <property type="match status" value="1"/>
</dbReference>
<dbReference type="FunFam" id="2.60.260.20:FF:000004">
    <property type="entry name" value="Molecular chaperone DnaJ"/>
    <property type="match status" value="1"/>
</dbReference>
<dbReference type="Gene3D" id="1.10.287.110">
    <property type="entry name" value="DnaJ domain"/>
    <property type="match status" value="1"/>
</dbReference>
<dbReference type="Gene3D" id="2.10.230.10">
    <property type="entry name" value="Heat shock protein DnaJ, cysteine-rich domain"/>
    <property type="match status" value="1"/>
</dbReference>
<dbReference type="Gene3D" id="2.60.260.20">
    <property type="entry name" value="Urease metallochaperone UreE, N-terminal domain"/>
    <property type="match status" value="2"/>
</dbReference>
<dbReference type="HAMAP" id="MF_01152">
    <property type="entry name" value="DnaJ"/>
    <property type="match status" value="1"/>
</dbReference>
<dbReference type="InterPro" id="IPR012724">
    <property type="entry name" value="DnaJ"/>
</dbReference>
<dbReference type="InterPro" id="IPR002939">
    <property type="entry name" value="DnaJ_C"/>
</dbReference>
<dbReference type="InterPro" id="IPR001623">
    <property type="entry name" value="DnaJ_domain"/>
</dbReference>
<dbReference type="InterPro" id="IPR018253">
    <property type="entry name" value="DnaJ_domain_CS"/>
</dbReference>
<dbReference type="InterPro" id="IPR008971">
    <property type="entry name" value="HSP40/DnaJ_pept-bd"/>
</dbReference>
<dbReference type="InterPro" id="IPR001305">
    <property type="entry name" value="HSP_DnaJ_Cys-rich_dom"/>
</dbReference>
<dbReference type="InterPro" id="IPR036410">
    <property type="entry name" value="HSP_DnaJ_Cys-rich_dom_sf"/>
</dbReference>
<dbReference type="InterPro" id="IPR036869">
    <property type="entry name" value="J_dom_sf"/>
</dbReference>
<dbReference type="NCBIfam" id="TIGR02349">
    <property type="entry name" value="DnaJ_bact"/>
    <property type="match status" value="1"/>
</dbReference>
<dbReference type="NCBIfam" id="NF008035">
    <property type="entry name" value="PRK10767.1"/>
    <property type="match status" value="1"/>
</dbReference>
<dbReference type="PANTHER" id="PTHR43096:SF48">
    <property type="entry name" value="CHAPERONE PROTEIN DNAJ"/>
    <property type="match status" value="1"/>
</dbReference>
<dbReference type="PANTHER" id="PTHR43096">
    <property type="entry name" value="DNAJ HOMOLOG 1, MITOCHONDRIAL-RELATED"/>
    <property type="match status" value="1"/>
</dbReference>
<dbReference type="Pfam" id="PF00226">
    <property type="entry name" value="DnaJ"/>
    <property type="match status" value="1"/>
</dbReference>
<dbReference type="Pfam" id="PF01556">
    <property type="entry name" value="DnaJ_C"/>
    <property type="match status" value="1"/>
</dbReference>
<dbReference type="Pfam" id="PF00684">
    <property type="entry name" value="DnaJ_CXXCXGXG"/>
    <property type="match status" value="1"/>
</dbReference>
<dbReference type="PRINTS" id="PR00625">
    <property type="entry name" value="JDOMAIN"/>
</dbReference>
<dbReference type="SMART" id="SM00271">
    <property type="entry name" value="DnaJ"/>
    <property type="match status" value="1"/>
</dbReference>
<dbReference type="SUPFAM" id="SSF46565">
    <property type="entry name" value="Chaperone J-domain"/>
    <property type="match status" value="1"/>
</dbReference>
<dbReference type="SUPFAM" id="SSF57938">
    <property type="entry name" value="DnaJ/Hsp40 cysteine-rich domain"/>
    <property type="match status" value="1"/>
</dbReference>
<dbReference type="SUPFAM" id="SSF49493">
    <property type="entry name" value="HSP40/DnaJ peptide-binding domain"/>
    <property type="match status" value="2"/>
</dbReference>
<dbReference type="PROSITE" id="PS00636">
    <property type="entry name" value="DNAJ_1"/>
    <property type="match status" value="1"/>
</dbReference>
<dbReference type="PROSITE" id="PS50076">
    <property type="entry name" value="DNAJ_2"/>
    <property type="match status" value="1"/>
</dbReference>
<dbReference type="PROSITE" id="PS51188">
    <property type="entry name" value="ZF_CR"/>
    <property type="match status" value="1"/>
</dbReference>
<accession>Q1IF58</accession>
<organism>
    <name type="scientific">Pseudomonas entomophila (strain L48)</name>
    <dbReference type="NCBI Taxonomy" id="384676"/>
    <lineage>
        <taxon>Bacteria</taxon>
        <taxon>Pseudomonadati</taxon>
        <taxon>Pseudomonadota</taxon>
        <taxon>Gammaproteobacteria</taxon>
        <taxon>Pseudomonadales</taxon>
        <taxon>Pseudomonadaceae</taxon>
        <taxon>Pseudomonas</taxon>
    </lineage>
</organism>
<comment type="function">
    <text evidence="1">Participates actively in the response to hyperosmotic and heat shock by preventing the aggregation of stress-denatured proteins and by disaggregating proteins, also in an autonomous, DnaK-independent fashion. Unfolded proteins bind initially to DnaJ; upon interaction with the DnaJ-bound protein, DnaK hydrolyzes its bound ATP, resulting in the formation of a stable complex. GrpE releases ADP from DnaK; ATP binding to DnaK triggers the release of the substrate protein, thus completing the reaction cycle. Several rounds of ATP-dependent interactions between DnaJ, DnaK and GrpE are required for fully efficient folding. Also involved, together with DnaK and GrpE, in the DNA replication of plasmids through activation of initiation proteins.</text>
</comment>
<comment type="cofactor">
    <cofactor evidence="1">
        <name>Zn(2+)</name>
        <dbReference type="ChEBI" id="CHEBI:29105"/>
    </cofactor>
    <text evidence="1">Binds 2 Zn(2+) ions per monomer.</text>
</comment>
<comment type="subunit">
    <text evidence="1">Homodimer.</text>
</comment>
<comment type="subcellular location">
    <subcellularLocation>
        <location evidence="1">Cytoplasm</location>
    </subcellularLocation>
</comment>
<comment type="domain">
    <text evidence="1">The J domain is necessary and sufficient to stimulate DnaK ATPase activity. Zinc center 1 plays an important role in the autonomous, DnaK-independent chaperone activity of DnaJ. Zinc center 2 is essential for interaction with DnaK and for DnaJ activity.</text>
</comment>
<comment type="similarity">
    <text evidence="1">Belongs to the DnaJ family.</text>
</comment>
<evidence type="ECO:0000255" key="1">
    <source>
        <dbReference type="HAMAP-Rule" id="MF_01152"/>
    </source>
</evidence>
<sequence length="375" mass="40265">MAKRDFYEVLGVERGASEGDLKKAYRRLAMKYHPDRNPGDKESEDKFKEANEAYEVLSDTSKRAAYDQYGHAGVDPSMGGGGAGFGGANFSDIFGDVFSDFFGGGRGGSRSGGAQRGSDLRYTLELNLEEAVRGTTVSIRVPTLVNCKPCDGSGAKKGSTPSTCPTCGGIGQVRMQQGFFAVQQTCPRCHGQGKIITDPCNSCHGEGRVEEYKTLSVKVPAGVDTGDRIRLSGEGEAGTHGGPTGDLYVVINVREHDIFQRDGKHLYCEVPISYTDAALGGELEVPTLDGRVKLKIPEGTQTGKQFRLRGKGVAPVRGGAAGDLLCRVAVETPVNLSRRQRELLEELRDSLEGDSSHSPKASGWFEGVKRFFGDL</sequence>
<name>DNAJ_PSEE4</name>
<proteinExistence type="inferred from homology"/>
<protein>
    <recommendedName>
        <fullName evidence="1">Chaperone protein DnaJ</fullName>
    </recommendedName>
</protein>
<reference key="1">
    <citation type="journal article" date="2006" name="Nat. Biotechnol.">
        <title>Complete genome sequence of the entomopathogenic and metabolically versatile soil bacterium Pseudomonas entomophila.</title>
        <authorList>
            <person name="Vodovar N."/>
            <person name="Vallenet D."/>
            <person name="Cruveiller S."/>
            <person name="Rouy Z."/>
            <person name="Barbe V."/>
            <person name="Acosta C."/>
            <person name="Cattolico L."/>
            <person name="Jubin C."/>
            <person name="Lajus A."/>
            <person name="Segurens B."/>
            <person name="Vacherie B."/>
            <person name="Wincker P."/>
            <person name="Weissenbach J."/>
            <person name="Lemaitre B."/>
            <person name="Medigue C."/>
            <person name="Boccard F."/>
        </authorList>
    </citation>
    <scope>NUCLEOTIDE SEQUENCE [LARGE SCALE GENOMIC DNA]</scope>
    <source>
        <strain>L48</strain>
    </source>
</reference>
<feature type="chain" id="PRO_1000085250" description="Chaperone protein DnaJ">
    <location>
        <begin position="1"/>
        <end position="375"/>
    </location>
</feature>
<feature type="domain" description="J" evidence="1">
    <location>
        <begin position="5"/>
        <end position="70"/>
    </location>
</feature>
<feature type="repeat" description="CXXCXGXG motif">
    <location>
        <begin position="147"/>
        <end position="154"/>
    </location>
</feature>
<feature type="repeat" description="CXXCXGXG motif">
    <location>
        <begin position="164"/>
        <end position="171"/>
    </location>
</feature>
<feature type="repeat" description="CXXCXGXG motif">
    <location>
        <begin position="186"/>
        <end position="193"/>
    </location>
</feature>
<feature type="repeat" description="CXXCXGXG motif">
    <location>
        <begin position="200"/>
        <end position="207"/>
    </location>
</feature>
<feature type="zinc finger region" description="CR-type" evidence="1">
    <location>
        <begin position="134"/>
        <end position="212"/>
    </location>
</feature>
<feature type="binding site" evidence="1">
    <location>
        <position position="147"/>
    </location>
    <ligand>
        <name>Zn(2+)</name>
        <dbReference type="ChEBI" id="CHEBI:29105"/>
        <label>1</label>
    </ligand>
</feature>
<feature type="binding site" evidence="1">
    <location>
        <position position="150"/>
    </location>
    <ligand>
        <name>Zn(2+)</name>
        <dbReference type="ChEBI" id="CHEBI:29105"/>
        <label>1</label>
    </ligand>
</feature>
<feature type="binding site" evidence="1">
    <location>
        <position position="164"/>
    </location>
    <ligand>
        <name>Zn(2+)</name>
        <dbReference type="ChEBI" id="CHEBI:29105"/>
        <label>2</label>
    </ligand>
</feature>
<feature type="binding site" evidence="1">
    <location>
        <position position="167"/>
    </location>
    <ligand>
        <name>Zn(2+)</name>
        <dbReference type="ChEBI" id="CHEBI:29105"/>
        <label>2</label>
    </ligand>
</feature>
<feature type="binding site" evidence="1">
    <location>
        <position position="186"/>
    </location>
    <ligand>
        <name>Zn(2+)</name>
        <dbReference type="ChEBI" id="CHEBI:29105"/>
        <label>2</label>
    </ligand>
</feature>
<feature type="binding site" evidence="1">
    <location>
        <position position="189"/>
    </location>
    <ligand>
        <name>Zn(2+)</name>
        <dbReference type="ChEBI" id="CHEBI:29105"/>
        <label>2</label>
    </ligand>
</feature>
<feature type="binding site" evidence="1">
    <location>
        <position position="200"/>
    </location>
    <ligand>
        <name>Zn(2+)</name>
        <dbReference type="ChEBI" id="CHEBI:29105"/>
        <label>1</label>
    </ligand>
</feature>
<feature type="binding site" evidence="1">
    <location>
        <position position="203"/>
    </location>
    <ligand>
        <name>Zn(2+)</name>
        <dbReference type="ChEBI" id="CHEBI:29105"/>
        <label>1</label>
    </ligand>
</feature>